<keyword id="KW-0004">4Fe-4S</keyword>
<keyword id="KW-0408">Iron</keyword>
<keyword id="KW-0411">Iron-sulfur</keyword>
<keyword id="KW-0456">Lyase</keyword>
<keyword id="KW-0479">Metal-binding</keyword>
<sequence>MDDSKRILITKILKNEVTEALGCTEVGLIGYAVSLCNISDPFSIEKIELTLNNGSFKNVYAVGVPNTGKYGLLPAVVGGFLGNSKNKLLIFNDITYSQELEDFTKEKLEIKVINGPLYCSVKIKDNSGKIHESLIKDNHLNVVIPEIKKEKINMEINSSEKEKYKNLELLDFLNYLDEIPEEIIKLVEKTIYTNKNLIKGDFLNYGTDILSNMVNKTTSACNIRMTGENMTAMSVAKSGNMGIMATLPIISYDFSTENNSEKLIKSVLLSMLVTIYSTYNSSYLSSMCGCVSKGGMGAVIGLSHYKNGKNLKKFDSSARTFTANLPGIICDGGKVGCALKLASGCFAAYSSLFVDISYENGIVGKNFKECVENISKISKAMGDLDCDIVEIMSKKEM</sequence>
<feature type="chain" id="PRO_0000339870" description="L-cysteine desulfidase">
    <location>
        <begin position="1"/>
        <end position="397"/>
    </location>
</feature>
<feature type="active site" description="Proton acceptor" evidence="1">
    <location>
        <position position="23"/>
    </location>
</feature>
<feature type="binding site" evidence="1">
    <location>
        <position position="288"/>
    </location>
    <ligand>
        <name>[4Fe-4S] cluster</name>
        <dbReference type="ChEBI" id="CHEBI:49883"/>
    </ligand>
</feature>
<feature type="binding site" evidence="1">
    <location>
        <position position="330"/>
    </location>
    <ligand>
        <name>[4Fe-4S] cluster</name>
        <dbReference type="ChEBI" id="CHEBI:49883"/>
    </ligand>
</feature>
<feature type="binding site" evidence="1">
    <location>
        <position position="337"/>
    </location>
    <ligand>
        <name>[4Fe-4S] cluster</name>
        <dbReference type="ChEBI" id="CHEBI:49883"/>
    </ligand>
</feature>
<accession>A4FW56</accession>
<reference key="1">
    <citation type="submission" date="2007-03" db="EMBL/GenBank/DDBJ databases">
        <title>Complete sequence of chromosome of Methanococcus maripaludis C5.</title>
        <authorList>
            <consortium name="US DOE Joint Genome Institute"/>
            <person name="Copeland A."/>
            <person name="Lucas S."/>
            <person name="Lapidus A."/>
            <person name="Barry K."/>
            <person name="Glavina del Rio T."/>
            <person name="Dalin E."/>
            <person name="Tice H."/>
            <person name="Pitluck S."/>
            <person name="Chertkov O."/>
            <person name="Brettin T."/>
            <person name="Bruce D."/>
            <person name="Han C."/>
            <person name="Detter J.C."/>
            <person name="Schmutz J."/>
            <person name="Larimer F."/>
            <person name="Land M."/>
            <person name="Hauser L."/>
            <person name="Kyrpides N."/>
            <person name="Mikhailova N."/>
            <person name="Sieprawska-Lupa M."/>
            <person name="Whitman W.B."/>
            <person name="Richardson P."/>
        </authorList>
    </citation>
    <scope>NUCLEOTIDE SEQUENCE [LARGE SCALE GENOMIC DNA]</scope>
    <source>
        <strain>C5 / ATCC BAA-1333</strain>
    </source>
</reference>
<evidence type="ECO:0000250" key="1">
    <source>
        <dbReference type="UniProtKB" id="Q58431"/>
    </source>
</evidence>
<evidence type="ECO:0000305" key="2"/>
<dbReference type="EC" id="4.4.1.28" evidence="1"/>
<dbReference type="EMBL" id="CP000609">
    <property type="protein sequence ID" value="ABO34427.1"/>
    <property type="molecule type" value="Genomic_DNA"/>
</dbReference>
<dbReference type="RefSeq" id="WP_011867887.1">
    <property type="nucleotide sequence ID" value="NC_009135.1"/>
</dbReference>
<dbReference type="STRING" id="402880.MmarC5_0110"/>
<dbReference type="GeneID" id="4927595"/>
<dbReference type="KEGG" id="mmq:MmarC5_0110"/>
<dbReference type="eggNOG" id="arCOG05065">
    <property type="taxonomic scope" value="Archaea"/>
</dbReference>
<dbReference type="HOGENOM" id="CLU_051840_0_0_2"/>
<dbReference type="OrthoDB" id="60297at2157"/>
<dbReference type="Proteomes" id="UP000000253">
    <property type="component" value="Chromosome"/>
</dbReference>
<dbReference type="GO" id="GO:0051539">
    <property type="term" value="F:4 iron, 4 sulfur cluster binding"/>
    <property type="evidence" value="ECO:0007669"/>
    <property type="project" value="UniProtKB-KW"/>
</dbReference>
<dbReference type="GO" id="GO:0080146">
    <property type="term" value="F:L-cysteine desulfhydrase activity"/>
    <property type="evidence" value="ECO:0007669"/>
    <property type="project" value="TreeGrafter"/>
</dbReference>
<dbReference type="GO" id="GO:0046872">
    <property type="term" value="F:metal ion binding"/>
    <property type="evidence" value="ECO:0007669"/>
    <property type="project" value="UniProtKB-KW"/>
</dbReference>
<dbReference type="GO" id="GO:0019450">
    <property type="term" value="P:L-cysteine catabolic process to pyruvate"/>
    <property type="evidence" value="ECO:0007669"/>
    <property type="project" value="TreeGrafter"/>
</dbReference>
<dbReference type="InterPro" id="IPR005130">
    <property type="entry name" value="Ser_deHydtase-like_asu"/>
</dbReference>
<dbReference type="InterPro" id="IPR021144">
    <property type="entry name" value="UPF0597"/>
</dbReference>
<dbReference type="PANTHER" id="PTHR30501">
    <property type="entry name" value="UPF0597 PROTEIN YHAM"/>
    <property type="match status" value="1"/>
</dbReference>
<dbReference type="PANTHER" id="PTHR30501:SF2">
    <property type="entry name" value="UPF0597 PROTEIN YHAM"/>
    <property type="match status" value="1"/>
</dbReference>
<dbReference type="Pfam" id="PF03313">
    <property type="entry name" value="SDH_alpha"/>
    <property type="match status" value="1"/>
</dbReference>
<dbReference type="PIRSF" id="PIRSF006054">
    <property type="entry name" value="UCP006054"/>
    <property type="match status" value="1"/>
</dbReference>
<organism>
    <name type="scientific">Methanococcus maripaludis (strain C5 / ATCC BAA-1333)</name>
    <dbReference type="NCBI Taxonomy" id="402880"/>
    <lineage>
        <taxon>Archaea</taxon>
        <taxon>Methanobacteriati</taxon>
        <taxon>Methanobacteriota</taxon>
        <taxon>Methanomada group</taxon>
        <taxon>Methanococci</taxon>
        <taxon>Methanococcales</taxon>
        <taxon>Methanococcaceae</taxon>
        <taxon>Methanococcus</taxon>
    </lineage>
</organism>
<proteinExistence type="inferred from homology"/>
<gene>
    <name type="ordered locus">MmarC5_0110</name>
</gene>
<name>CYDE_METM5</name>
<protein>
    <recommendedName>
        <fullName evidence="1">L-cysteine desulfidase</fullName>
        <ecNumber evidence="1">4.4.1.28</ecNumber>
    </recommendedName>
    <alternativeName>
        <fullName>L-cysteine desulfhydrase</fullName>
    </alternativeName>
</protein>
<comment type="function">
    <text evidence="1">Catalyzes the cleavage of L-cysteine to form 2-aminoprop-2-enoate and sulfide. The former then spontaneously hydrolyzes to pyruvate and NH(3). May be responsible for the production of sulfide required for the biosynthesis of iron-sulfur centers in this archaea.</text>
</comment>
<comment type="catalytic activity">
    <reaction evidence="1">
        <text>L-cysteine + H2O = hydrogen sulfide + pyruvate + NH4(+) + H(+)</text>
        <dbReference type="Rhea" id="RHEA:24931"/>
        <dbReference type="ChEBI" id="CHEBI:15361"/>
        <dbReference type="ChEBI" id="CHEBI:15377"/>
        <dbReference type="ChEBI" id="CHEBI:15378"/>
        <dbReference type="ChEBI" id="CHEBI:28938"/>
        <dbReference type="ChEBI" id="CHEBI:29919"/>
        <dbReference type="ChEBI" id="CHEBI:35235"/>
        <dbReference type="EC" id="4.4.1.28"/>
    </reaction>
</comment>
<comment type="cofactor">
    <cofactor evidence="1">
        <name>[4Fe-4S] cluster</name>
        <dbReference type="ChEBI" id="CHEBI:49883"/>
    </cofactor>
    <text evidence="1">Binds 1 [4Fe-4S] cluster per subunit.</text>
</comment>
<comment type="subunit">
    <text evidence="1">Homotrimer.</text>
</comment>
<comment type="similarity">
    <text evidence="2">Belongs to the L-cysteine desulfidase family.</text>
</comment>